<name>LIPA_SYNC1</name>
<sequence length="309" mass="34154">MDVGQKKRGADKTALATTDEQGALSKPTWIRAKAPISPEVGRLTGILRDLHLHTVCEEASCPNLGECFKRGTATFMIMGDVCTRRCPFCDVAHGRPAALDTEEPGHLADAIGAMKLKYVVITSVTRDDLEDGGAAHFAQCIESIRKKTEGVKVEILVPDFRGHVDAALKNLGNCLPDVFNHNLETVPRLYAESRPGARYHESLRLLQRFKETYPGIPTKSGLMLGLGETDEEILEVMRDLRVHGCDMLTIGQYLRPSRHHLPVQRYVTPEQFEAFRVAGLKMGFSQVASGPLVRSSYHADLQAKEVLHT</sequence>
<accession>Q57390</accession>
<accession>Q3A7N8</accession>
<keyword id="KW-0004">4Fe-4S</keyword>
<keyword id="KW-0963">Cytoplasm</keyword>
<keyword id="KW-0408">Iron</keyword>
<keyword id="KW-0411">Iron-sulfur</keyword>
<keyword id="KW-0479">Metal-binding</keyword>
<keyword id="KW-1185">Reference proteome</keyword>
<keyword id="KW-0949">S-adenosyl-L-methionine</keyword>
<keyword id="KW-0808">Transferase</keyword>
<gene>
    <name evidence="1" type="primary">lipA</name>
    <name type="synonym">acoS</name>
    <name type="ordered locus">Pcar_0346</name>
</gene>
<protein>
    <recommendedName>
        <fullName evidence="1">Lipoyl synthase</fullName>
        <ecNumber evidence="1">2.8.1.8</ecNumber>
    </recommendedName>
    <alternativeName>
        <fullName evidence="1">Lip-syn</fullName>
        <shortName evidence="1">LS</shortName>
    </alternativeName>
    <alternativeName>
        <fullName evidence="1">Lipoate synthase</fullName>
    </alternativeName>
    <alternativeName>
        <fullName evidence="1">Lipoic acid synthase</fullName>
    </alternativeName>
    <alternativeName>
        <fullName evidence="1">Sulfur insertion protein LipA</fullName>
    </alternativeName>
</protein>
<reference key="1">
    <citation type="journal article" date="1994" name="J. Bacteriol.">
        <title>Identification and molecular characterization of the aco genes encoding the Pelobacter carbinolicus acetoin dehydrogenase enzyme system.</title>
        <authorList>
            <person name="Oppermann F.B."/>
            <person name="Steinbuechel A."/>
        </authorList>
    </citation>
    <scope>NUCLEOTIDE SEQUENCE [GENOMIC DNA]</scope>
</reference>
<reference key="2">
    <citation type="submission" date="2005-10" db="EMBL/GenBank/DDBJ databases">
        <title>Complete sequence of Pelobacter carbinolicus DSM 2380.</title>
        <authorList>
            <person name="Copeland A."/>
            <person name="Lucas S."/>
            <person name="Lapidus A."/>
            <person name="Barry K."/>
            <person name="Detter J.C."/>
            <person name="Glavina T."/>
            <person name="Hammon N."/>
            <person name="Israni S."/>
            <person name="Pitluck S."/>
            <person name="Chertkov O."/>
            <person name="Schmutz J."/>
            <person name="Larimer F."/>
            <person name="Land M."/>
            <person name="Kyrpides N."/>
            <person name="Ivanova N."/>
            <person name="Richardson P."/>
        </authorList>
    </citation>
    <scope>NUCLEOTIDE SEQUENCE [LARGE SCALE GENOMIC DNA]</scope>
    <source>
        <strain>DSM 2380 / NBRC 103641 / GraBd1</strain>
    </source>
</reference>
<evidence type="ECO:0000255" key="1">
    <source>
        <dbReference type="HAMAP-Rule" id="MF_00206"/>
    </source>
</evidence>
<evidence type="ECO:0000255" key="2">
    <source>
        <dbReference type="PROSITE-ProRule" id="PRU01266"/>
    </source>
</evidence>
<evidence type="ECO:0000305" key="3"/>
<proteinExistence type="inferred from homology"/>
<organism>
    <name type="scientific">Syntrophotalea carbinolica (strain DSM 2380 / NBRC 103641 / GraBd1)</name>
    <name type="common">Pelobacter carbinolicus</name>
    <dbReference type="NCBI Taxonomy" id="338963"/>
    <lineage>
        <taxon>Bacteria</taxon>
        <taxon>Pseudomonadati</taxon>
        <taxon>Thermodesulfobacteriota</taxon>
        <taxon>Desulfuromonadia</taxon>
        <taxon>Desulfuromonadales</taxon>
        <taxon>Syntrophotaleaceae</taxon>
        <taxon>Syntrophotalea</taxon>
    </lineage>
</organism>
<comment type="function">
    <text evidence="1">Catalyzes the radical-mediated insertion of two sulfur atoms into the C-6 and C-8 positions of the octanoyl moiety bound to the lipoyl domains of lipoate-dependent enzymes, thereby converting the octanoylated domains into lipoylated derivatives.</text>
</comment>
<comment type="catalytic activity">
    <reaction evidence="1">
        <text>[[Fe-S] cluster scaffold protein carrying a second [4Fe-4S](2+) cluster] + N(6)-octanoyl-L-lysyl-[protein] + 2 oxidized [2Fe-2S]-[ferredoxin] + 2 S-adenosyl-L-methionine + 4 H(+) = [[Fe-S] cluster scaffold protein] + N(6)-[(R)-dihydrolipoyl]-L-lysyl-[protein] + 4 Fe(3+) + 2 hydrogen sulfide + 2 5'-deoxyadenosine + 2 L-methionine + 2 reduced [2Fe-2S]-[ferredoxin]</text>
        <dbReference type="Rhea" id="RHEA:16585"/>
        <dbReference type="Rhea" id="RHEA-COMP:9928"/>
        <dbReference type="Rhea" id="RHEA-COMP:10000"/>
        <dbReference type="Rhea" id="RHEA-COMP:10001"/>
        <dbReference type="Rhea" id="RHEA-COMP:10475"/>
        <dbReference type="Rhea" id="RHEA-COMP:14568"/>
        <dbReference type="Rhea" id="RHEA-COMP:14569"/>
        <dbReference type="ChEBI" id="CHEBI:15378"/>
        <dbReference type="ChEBI" id="CHEBI:17319"/>
        <dbReference type="ChEBI" id="CHEBI:29034"/>
        <dbReference type="ChEBI" id="CHEBI:29919"/>
        <dbReference type="ChEBI" id="CHEBI:33722"/>
        <dbReference type="ChEBI" id="CHEBI:33737"/>
        <dbReference type="ChEBI" id="CHEBI:33738"/>
        <dbReference type="ChEBI" id="CHEBI:57844"/>
        <dbReference type="ChEBI" id="CHEBI:59789"/>
        <dbReference type="ChEBI" id="CHEBI:78809"/>
        <dbReference type="ChEBI" id="CHEBI:83100"/>
        <dbReference type="EC" id="2.8.1.8"/>
    </reaction>
</comment>
<comment type="cofactor">
    <cofactor evidence="1">
        <name>[4Fe-4S] cluster</name>
        <dbReference type="ChEBI" id="CHEBI:49883"/>
    </cofactor>
    <text evidence="1">Binds 2 [4Fe-4S] clusters per subunit. One cluster is coordinated with 3 cysteines and an exchangeable S-adenosyl-L-methionine.</text>
</comment>
<comment type="pathway">
    <text evidence="1">Protein modification; protein lipoylation via endogenous pathway; protein N(6)-(lipoyl)lysine from octanoyl-[acyl-carrier-protein]: step 2/2.</text>
</comment>
<comment type="subcellular location">
    <subcellularLocation>
        <location evidence="1">Cytoplasm</location>
    </subcellularLocation>
</comment>
<comment type="similarity">
    <text evidence="1">Belongs to the radical SAM superfamily. Lipoyl synthase family.</text>
</comment>
<feature type="chain" id="PRO_0000102333" description="Lipoyl synthase">
    <location>
        <begin position="1"/>
        <end position="309"/>
    </location>
</feature>
<feature type="domain" description="Radical SAM core" evidence="2">
    <location>
        <begin position="68"/>
        <end position="285"/>
    </location>
</feature>
<feature type="binding site" evidence="1">
    <location>
        <position position="56"/>
    </location>
    <ligand>
        <name>[4Fe-4S] cluster</name>
        <dbReference type="ChEBI" id="CHEBI:49883"/>
        <label>1</label>
    </ligand>
</feature>
<feature type="binding site" evidence="1">
    <location>
        <position position="61"/>
    </location>
    <ligand>
        <name>[4Fe-4S] cluster</name>
        <dbReference type="ChEBI" id="CHEBI:49883"/>
        <label>1</label>
    </ligand>
</feature>
<feature type="binding site" evidence="1">
    <location>
        <position position="67"/>
    </location>
    <ligand>
        <name>[4Fe-4S] cluster</name>
        <dbReference type="ChEBI" id="CHEBI:49883"/>
        <label>1</label>
    </ligand>
</feature>
<feature type="binding site" evidence="1">
    <location>
        <position position="82"/>
    </location>
    <ligand>
        <name>[4Fe-4S] cluster</name>
        <dbReference type="ChEBI" id="CHEBI:49883"/>
        <label>2</label>
        <note>4Fe-4S-S-AdoMet</note>
    </ligand>
</feature>
<feature type="binding site" evidence="1">
    <location>
        <position position="86"/>
    </location>
    <ligand>
        <name>[4Fe-4S] cluster</name>
        <dbReference type="ChEBI" id="CHEBI:49883"/>
        <label>2</label>
        <note>4Fe-4S-S-AdoMet</note>
    </ligand>
</feature>
<feature type="binding site" evidence="1">
    <location>
        <position position="89"/>
    </location>
    <ligand>
        <name>[4Fe-4S] cluster</name>
        <dbReference type="ChEBI" id="CHEBI:49883"/>
        <label>2</label>
        <note>4Fe-4S-S-AdoMet</note>
    </ligand>
</feature>
<feature type="binding site" evidence="1">
    <location>
        <position position="296"/>
    </location>
    <ligand>
        <name>[4Fe-4S] cluster</name>
        <dbReference type="ChEBI" id="CHEBI:49883"/>
        <label>1</label>
    </ligand>
</feature>
<feature type="sequence conflict" description="In Ref. 1; AAA91878/AAA18918." evidence="3" ref="1">
    <original>EGV</original>
    <variation>RRVY</variation>
    <location>
        <begin position="149"/>
        <end position="151"/>
    </location>
</feature>
<dbReference type="EC" id="2.8.1.8" evidence="1"/>
<dbReference type="EMBL" id="L24124">
    <property type="protein sequence ID" value="AAA91878.1"/>
    <property type="molecule type" value="Genomic_DNA"/>
</dbReference>
<dbReference type="EMBL" id="U01100">
    <property type="protein sequence ID" value="AAA18918.1"/>
    <property type="molecule type" value="Unassigned_DNA"/>
</dbReference>
<dbReference type="EMBL" id="CP000142">
    <property type="protein sequence ID" value="ABA87606.1"/>
    <property type="molecule type" value="Genomic_DNA"/>
</dbReference>
<dbReference type="PIR" id="E36953">
    <property type="entry name" value="E36953"/>
</dbReference>
<dbReference type="RefSeq" id="WP_011340025.1">
    <property type="nucleotide sequence ID" value="NC_007498.2"/>
</dbReference>
<dbReference type="SMR" id="Q57390"/>
<dbReference type="STRING" id="338963.Pcar_0346"/>
<dbReference type="KEGG" id="pca:Pcar_0346"/>
<dbReference type="eggNOG" id="COG0320">
    <property type="taxonomic scope" value="Bacteria"/>
</dbReference>
<dbReference type="HOGENOM" id="CLU_033144_2_1_7"/>
<dbReference type="OrthoDB" id="9787898at2"/>
<dbReference type="UniPathway" id="UPA00538">
    <property type="reaction ID" value="UER00593"/>
</dbReference>
<dbReference type="Proteomes" id="UP000002534">
    <property type="component" value="Chromosome"/>
</dbReference>
<dbReference type="GO" id="GO:0005737">
    <property type="term" value="C:cytoplasm"/>
    <property type="evidence" value="ECO:0007669"/>
    <property type="project" value="UniProtKB-SubCell"/>
</dbReference>
<dbReference type="GO" id="GO:0051539">
    <property type="term" value="F:4 iron, 4 sulfur cluster binding"/>
    <property type="evidence" value="ECO:0007669"/>
    <property type="project" value="UniProtKB-UniRule"/>
</dbReference>
<dbReference type="GO" id="GO:0016992">
    <property type="term" value="F:lipoate synthase activity"/>
    <property type="evidence" value="ECO:0007669"/>
    <property type="project" value="UniProtKB-UniRule"/>
</dbReference>
<dbReference type="GO" id="GO:0046872">
    <property type="term" value="F:metal ion binding"/>
    <property type="evidence" value="ECO:0007669"/>
    <property type="project" value="UniProtKB-KW"/>
</dbReference>
<dbReference type="CDD" id="cd01335">
    <property type="entry name" value="Radical_SAM"/>
    <property type="match status" value="1"/>
</dbReference>
<dbReference type="FunFam" id="3.20.20.70:FF:000040">
    <property type="entry name" value="Lipoyl synthase"/>
    <property type="match status" value="1"/>
</dbReference>
<dbReference type="Gene3D" id="3.20.20.70">
    <property type="entry name" value="Aldolase class I"/>
    <property type="match status" value="1"/>
</dbReference>
<dbReference type="HAMAP" id="MF_00206">
    <property type="entry name" value="Lipoyl_synth"/>
    <property type="match status" value="1"/>
</dbReference>
<dbReference type="InterPro" id="IPR013785">
    <property type="entry name" value="Aldolase_TIM"/>
</dbReference>
<dbReference type="InterPro" id="IPR006638">
    <property type="entry name" value="Elp3/MiaA/NifB-like_rSAM"/>
</dbReference>
<dbReference type="InterPro" id="IPR031691">
    <property type="entry name" value="LIAS_N"/>
</dbReference>
<dbReference type="InterPro" id="IPR003698">
    <property type="entry name" value="Lipoyl_synth"/>
</dbReference>
<dbReference type="InterPro" id="IPR007197">
    <property type="entry name" value="rSAM"/>
</dbReference>
<dbReference type="NCBIfam" id="TIGR00510">
    <property type="entry name" value="lipA"/>
    <property type="match status" value="1"/>
</dbReference>
<dbReference type="NCBIfam" id="NF004019">
    <property type="entry name" value="PRK05481.1"/>
    <property type="match status" value="1"/>
</dbReference>
<dbReference type="NCBIfam" id="NF009544">
    <property type="entry name" value="PRK12928.1"/>
    <property type="match status" value="1"/>
</dbReference>
<dbReference type="PANTHER" id="PTHR10949">
    <property type="entry name" value="LIPOYL SYNTHASE"/>
    <property type="match status" value="1"/>
</dbReference>
<dbReference type="PANTHER" id="PTHR10949:SF0">
    <property type="entry name" value="LIPOYL SYNTHASE, MITOCHONDRIAL"/>
    <property type="match status" value="1"/>
</dbReference>
<dbReference type="Pfam" id="PF16881">
    <property type="entry name" value="LIAS_N"/>
    <property type="match status" value="1"/>
</dbReference>
<dbReference type="Pfam" id="PF04055">
    <property type="entry name" value="Radical_SAM"/>
    <property type="match status" value="1"/>
</dbReference>
<dbReference type="PIRSF" id="PIRSF005963">
    <property type="entry name" value="Lipoyl_synth"/>
    <property type="match status" value="1"/>
</dbReference>
<dbReference type="SFLD" id="SFLDF00271">
    <property type="entry name" value="lipoyl_synthase"/>
    <property type="match status" value="1"/>
</dbReference>
<dbReference type="SFLD" id="SFLDG01058">
    <property type="entry name" value="lipoyl_synthase_like"/>
    <property type="match status" value="1"/>
</dbReference>
<dbReference type="SMART" id="SM00729">
    <property type="entry name" value="Elp3"/>
    <property type="match status" value="1"/>
</dbReference>
<dbReference type="SUPFAM" id="SSF102114">
    <property type="entry name" value="Radical SAM enzymes"/>
    <property type="match status" value="1"/>
</dbReference>
<dbReference type="PROSITE" id="PS51918">
    <property type="entry name" value="RADICAL_SAM"/>
    <property type="match status" value="1"/>
</dbReference>